<evidence type="ECO:0000255" key="1">
    <source>
        <dbReference type="HAMAP-Rule" id="MF_00550"/>
    </source>
</evidence>
<evidence type="ECO:0000305" key="2"/>
<sequence length="407" mass="44998">MKYDNLLDRFIKYVKVNTRSDPDSETTPSTESQEAFALTILKPEMEAIGLQDVHYNPVNGYLIGTLPANNPTLTRKIGFIAHMDTADFNAENVNPQIIDNYQGGDITLGSSNYKLDPKAFPNLNNYIGQTLITTDGTTLLGADDKSGIAEIMTAIEFLTSQPQIEHCDIKVAFGPDEEIGVGADKFEVADFEVDFAYTMDGGPLGELQYETFSAAALEVTFLGRNVHPGTAKDQMINALQLAIDFHEKLPAKERPEYTDGYQGFYHLTGLTGTVEEARASYIIRDFEEASFEARKVKVENIAQSMNAQLGTKRVLVELNDQYYNMKKVIEKDMTAIELAKEVMEELAIKPVIEPIRGGTDGSKISFMGIPTPNIFAGGENMHGRFEFVSLQTMERAVDVIIGLVCKA</sequence>
<reference key="1">
    <citation type="journal article" date="2006" name="Proc. Natl. Acad. Sci. U.S.A.">
        <title>Molecular genetic anatomy of inter- and intraserotype variation in the human bacterial pathogen group A Streptococcus.</title>
        <authorList>
            <person name="Beres S.B."/>
            <person name="Richter E.W."/>
            <person name="Nagiec M.J."/>
            <person name="Sumby P."/>
            <person name="Porcella S.F."/>
            <person name="DeLeo F.R."/>
            <person name="Musser J.M."/>
        </authorList>
    </citation>
    <scope>NUCLEOTIDE SEQUENCE [LARGE SCALE GENOMIC DNA]</scope>
    <source>
        <strain>MGAS10270</strain>
    </source>
</reference>
<comment type="function">
    <text evidence="1">Cleaves the N-terminal amino acid of tripeptides.</text>
</comment>
<comment type="catalytic activity">
    <reaction evidence="1">
        <text>Release of the N-terminal residue from a tripeptide.</text>
        <dbReference type="EC" id="3.4.11.4"/>
    </reaction>
</comment>
<comment type="cofactor">
    <cofactor evidence="1">
        <name>Zn(2+)</name>
        <dbReference type="ChEBI" id="CHEBI:29105"/>
    </cofactor>
    <text evidence="1">Binds 2 Zn(2+) ions per subunit.</text>
</comment>
<comment type="subcellular location">
    <subcellularLocation>
        <location evidence="1">Cytoplasm</location>
    </subcellularLocation>
</comment>
<comment type="similarity">
    <text evidence="1">Belongs to the peptidase M20B family.</text>
</comment>
<comment type="sequence caution" evidence="2">
    <conflict type="erroneous initiation">
        <sequence resource="EMBL-CDS" id="ABF33734"/>
    </conflict>
</comment>
<proteinExistence type="inferred from homology"/>
<organism>
    <name type="scientific">Streptococcus pyogenes serotype M2 (strain MGAS10270)</name>
    <dbReference type="NCBI Taxonomy" id="370552"/>
    <lineage>
        <taxon>Bacteria</taxon>
        <taxon>Bacillati</taxon>
        <taxon>Bacillota</taxon>
        <taxon>Bacilli</taxon>
        <taxon>Lactobacillales</taxon>
        <taxon>Streptococcaceae</taxon>
        <taxon>Streptococcus</taxon>
    </lineage>
</organism>
<gene>
    <name evidence="1" type="primary">pepT</name>
    <name type="ordered locus">MGAS10270_Spy0669</name>
</gene>
<accession>Q1JHK2</accession>
<name>PEPT_STRPD</name>
<keyword id="KW-0031">Aminopeptidase</keyword>
<keyword id="KW-0963">Cytoplasm</keyword>
<keyword id="KW-0378">Hydrolase</keyword>
<keyword id="KW-0479">Metal-binding</keyword>
<keyword id="KW-0482">Metalloprotease</keyword>
<keyword id="KW-0645">Protease</keyword>
<keyword id="KW-0862">Zinc</keyword>
<feature type="chain" id="PRO_0000274026" description="Peptidase T">
    <location>
        <begin position="1"/>
        <end position="407"/>
    </location>
</feature>
<feature type="active site" evidence="1">
    <location>
        <position position="84"/>
    </location>
</feature>
<feature type="active site" description="Proton acceptor" evidence="1">
    <location>
        <position position="177"/>
    </location>
</feature>
<feature type="binding site" evidence="1">
    <location>
        <position position="82"/>
    </location>
    <ligand>
        <name>Zn(2+)</name>
        <dbReference type="ChEBI" id="CHEBI:29105"/>
        <label>1</label>
    </ligand>
</feature>
<feature type="binding site" evidence="1">
    <location>
        <position position="143"/>
    </location>
    <ligand>
        <name>Zn(2+)</name>
        <dbReference type="ChEBI" id="CHEBI:29105"/>
        <label>1</label>
    </ligand>
</feature>
<feature type="binding site" evidence="1">
    <location>
        <position position="143"/>
    </location>
    <ligand>
        <name>Zn(2+)</name>
        <dbReference type="ChEBI" id="CHEBI:29105"/>
        <label>2</label>
    </ligand>
</feature>
<feature type="binding site" evidence="1">
    <location>
        <position position="178"/>
    </location>
    <ligand>
        <name>Zn(2+)</name>
        <dbReference type="ChEBI" id="CHEBI:29105"/>
        <label>2</label>
    </ligand>
</feature>
<feature type="binding site" evidence="1">
    <location>
        <position position="200"/>
    </location>
    <ligand>
        <name>Zn(2+)</name>
        <dbReference type="ChEBI" id="CHEBI:29105"/>
        <label>1</label>
    </ligand>
</feature>
<feature type="binding site" evidence="1">
    <location>
        <position position="382"/>
    </location>
    <ligand>
        <name>Zn(2+)</name>
        <dbReference type="ChEBI" id="CHEBI:29105"/>
        <label>2</label>
    </ligand>
</feature>
<protein>
    <recommendedName>
        <fullName evidence="1">Peptidase T</fullName>
        <ecNumber evidence="1">3.4.11.4</ecNumber>
    </recommendedName>
    <alternativeName>
        <fullName evidence="1">Aminotripeptidase</fullName>
        <shortName evidence="1">Tripeptidase</shortName>
    </alternativeName>
    <alternativeName>
        <fullName evidence="1">Tripeptide aminopeptidase</fullName>
    </alternativeName>
</protein>
<dbReference type="EC" id="3.4.11.4" evidence="1"/>
<dbReference type="EMBL" id="CP000260">
    <property type="protein sequence ID" value="ABF33734.1"/>
    <property type="status" value="ALT_INIT"/>
    <property type="molecule type" value="Genomic_DNA"/>
</dbReference>
<dbReference type="SMR" id="Q1JHK2"/>
<dbReference type="MEROPS" id="M20.003"/>
<dbReference type="KEGG" id="sph:MGAS10270_Spy0669"/>
<dbReference type="HOGENOM" id="CLU_053676_0_0_9"/>
<dbReference type="Proteomes" id="UP000002436">
    <property type="component" value="Chromosome"/>
</dbReference>
<dbReference type="GO" id="GO:0005829">
    <property type="term" value="C:cytosol"/>
    <property type="evidence" value="ECO:0007669"/>
    <property type="project" value="TreeGrafter"/>
</dbReference>
<dbReference type="GO" id="GO:0008237">
    <property type="term" value="F:metallopeptidase activity"/>
    <property type="evidence" value="ECO:0007669"/>
    <property type="project" value="UniProtKB-KW"/>
</dbReference>
<dbReference type="GO" id="GO:0045148">
    <property type="term" value="F:tripeptide aminopeptidase activity"/>
    <property type="evidence" value="ECO:0007669"/>
    <property type="project" value="UniProtKB-UniRule"/>
</dbReference>
<dbReference type="GO" id="GO:0008270">
    <property type="term" value="F:zinc ion binding"/>
    <property type="evidence" value="ECO:0007669"/>
    <property type="project" value="UniProtKB-UniRule"/>
</dbReference>
<dbReference type="GO" id="GO:0043171">
    <property type="term" value="P:peptide catabolic process"/>
    <property type="evidence" value="ECO:0007669"/>
    <property type="project" value="UniProtKB-UniRule"/>
</dbReference>
<dbReference type="GO" id="GO:0006508">
    <property type="term" value="P:proteolysis"/>
    <property type="evidence" value="ECO:0007669"/>
    <property type="project" value="UniProtKB-UniRule"/>
</dbReference>
<dbReference type="CDD" id="cd03892">
    <property type="entry name" value="M20_peptT"/>
    <property type="match status" value="1"/>
</dbReference>
<dbReference type="FunFam" id="3.30.70.360:FF:000002">
    <property type="entry name" value="Peptidase T"/>
    <property type="match status" value="1"/>
</dbReference>
<dbReference type="Gene3D" id="3.30.70.360">
    <property type="match status" value="1"/>
</dbReference>
<dbReference type="Gene3D" id="3.40.630.10">
    <property type="entry name" value="Zn peptidases"/>
    <property type="match status" value="1"/>
</dbReference>
<dbReference type="HAMAP" id="MF_00550">
    <property type="entry name" value="Aminopeptidase_M20"/>
    <property type="match status" value="1"/>
</dbReference>
<dbReference type="InterPro" id="IPR001261">
    <property type="entry name" value="ArgE/DapE_CS"/>
</dbReference>
<dbReference type="InterPro" id="IPR036264">
    <property type="entry name" value="Bact_exopeptidase_dim_dom"/>
</dbReference>
<dbReference type="InterPro" id="IPR002933">
    <property type="entry name" value="Peptidase_M20"/>
</dbReference>
<dbReference type="InterPro" id="IPR011650">
    <property type="entry name" value="Peptidase_M20_dimer"/>
</dbReference>
<dbReference type="InterPro" id="IPR010161">
    <property type="entry name" value="Peptidase_M20B"/>
</dbReference>
<dbReference type="NCBIfam" id="TIGR01882">
    <property type="entry name" value="peptidase-T"/>
    <property type="match status" value="1"/>
</dbReference>
<dbReference type="NCBIfam" id="NF003976">
    <property type="entry name" value="PRK05469.1"/>
    <property type="match status" value="1"/>
</dbReference>
<dbReference type="NCBIfam" id="NF009920">
    <property type="entry name" value="PRK13381.1"/>
    <property type="match status" value="1"/>
</dbReference>
<dbReference type="PANTHER" id="PTHR42994">
    <property type="entry name" value="PEPTIDASE T"/>
    <property type="match status" value="1"/>
</dbReference>
<dbReference type="PANTHER" id="PTHR42994:SF1">
    <property type="entry name" value="PEPTIDASE T"/>
    <property type="match status" value="1"/>
</dbReference>
<dbReference type="Pfam" id="PF07687">
    <property type="entry name" value="M20_dimer"/>
    <property type="match status" value="1"/>
</dbReference>
<dbReference type="Pfam" id="PF01546">
    <property type="entry name" value="Peptidase_M20"/>
    <property type="match status" value="1"/>
</dbReference>
<dbReference type="PIRSF" id="PIRSF037215">
    <property type="entry name" value="Peptidase_M20B"/>
    <property type="match status" value="1"/>
</dbReference>
<dbReference type="SUPFAM" id="SSF55031">
    <property type="entry name" value="Bacterial exopeptidase dimerisation domain"/>
    <property type="match status" value="1"/>
</dbReference>
<dbReference type="SUPFAM" id="SSF53187">
    <property type="entry name" value="Zn-dependent exopeptidases"/>
    <property type="match status" value="1"/>
</dbReference>
<dbReference type="PROSITE" id="PS00758">
    <property type="entry name" value="ARGE_DAPE_CPG2_1"/>
    <property type="match status" value="1"/>
</dbReference>
<dbReference type="PROSITE" id="PS00759">
    <property type="entry name" value="ARGE_DAPE_CPG2_2"/>
    <property type="match status" value="1"/>
</dbReference>